<reference key="1">
    <citation type="submission" date="2007-04" db="EMBL/GenBank/DDBJ databases">
        <title>Complete sequence of Shewanella putrefaciens CN-32.</title>
        <authorList>
            <consortium name="US DOE Joint Genome Institute"/>
            <person name="Copeland A."/>
            <person name="Lucas S."/>
            <person name="Lapidus A."/>
            <person name="Barry K."/>
            <person name="Detter J.C."/>
            <person name="Glavina del Rio T."/>
            <person name="Hammon N."/>
            <person name="Israni S."/>
            <person name="Dalin E."/>
            <person name="Tice H."/>
            <person name="Pitluck S."/>
            <person name="Chain P."/>
            <person name="Malfatti S."/>
            <person name="Shin M."/>
            <person name="Vergez L."/>
            <person name="Schmutz J."/>
            <person name="Larimer F."/>
            <person name="Land M."/>
            <person name="Hauser L."/>
            <person name="Kyrpides N."/>
            <person name="Mikhailova N."/>
            <person name="Romine M.F."/>
            <person name="Fredrickson J."/>
            <person name="Tiedje J."/>
            <person name="Richardson P."/>
        </authorList>
    </citation>
    <scope>NUCLEOTIDE SEQUENCE [LARGE SCALE GENOMIC DNA]</scope>
    <source>
        <strain>CN-32 / ATCC BAA-453</strain>
    </source>
</reference>
<dbReference type="EC" id="4.2.1.49" evidence="1"/>
<dbReference type="EMBL" id="CP000681">
    <property type="protein sequence ID" value="ABP73815.1"/>
    <property type="molecule type" value="Genomic_DNA"/>
</dbReference>
<dbReference type="SMR" id="A4Y1I2"/>
<dbReference type="STRING" id="319224.Sputcn32_0079"/>
<dbReference type="KEGG" id="spc:Sputcn32_0079"/>
<dbReference type="eggNOG" id="COG2987">
    <property type="taxonomic scope" value="Bacteria"/>
</dbReference>
<dbReference type="HOGENOM" id="CLU_018868_0_1_6"/>
<dbReference type="UniPathway" id="UPA00379">
    <property type="reaction ID" value="UER00550"/>
</dbReference>
<dbReference type="GO" id="GO:0005737">
    <property type="term" value="C:cytoplasm"/>
    <property type="evidence" value="ECO:0007669"/>
    <property type="project" value="UniProtKB-SubCell"/>
</dbReference>
<dbReference type="GO" id="GO:0016153">
    <property type="term" value="F:urocanate hydratase activity"/>
    <property type="evidence" value="ECO:0007669"/>
    <property type="project" value="UniProtKB-UniRule"/>
</dbReference>
<dbReference type="GO" id="GO:0019556">
    <property type="term" value="P:L-histidine catabolic process to glutamate and formamide"/>
    <property type="evidence" value="ECO:0007669"/>
    <property type="project" value="UniProtKB-UniPathway"/>
</dbReference>
<dbReference type="GO" id="GO:0019557">
    <property type="term" value="P:L-histidine catabolic process to glutamate and formate"/>
    <property type="evidence" value="ECO:0007669"/>
    <property type="project" value="UniProtKB-UniPathway"/>
</dbReference>
<dbReference type="FunFam" id="3.40.50.10730:FF:000001">
    <property type="entry name" value="Urocanate hydratase"/>
    <property type="match status" value="1"/>
</dbReference>
<dbReference type="Gene3D" id="3.40.50.10730">
    <property type="entry name" value="Urocanase like domains"/>
    <property type="match status" value="1"/>
</dbReference>
<dbReference type="Gene3D" id="3.40.1770.10">
    <property type="entry name" value="Urocanase superfamily"/>
    <property type="match status" value="1"/>
</dbReference>
<dbReference type="HAMAP" id="MF_00577">
    <property type="entry name" value="HutU"/>
    <property type="match status" value="1"/>
</dbReference>
<dbReference type="InterPro" id="IPR055351">
    <property type="entry name" value="Urocanase"/>
</dbReference>
<dbReference type="InterPro" id="IPR023637">
    <property type="entry name" value="Urocanase-like"/>
</dbReference>
<dbReference type="InterPro" id="IPR035401">
    <property type="entry name" value="Urocanase_C"/>
</dbReference>
<dbReference type="InterPro" id="IPR038364">
    <property type="entry name" value="Urocanase_central_sf"/>
</dbReference>
<dbReference type="InterPro" id="IPR023636">
    <property type="entry name" value="Urocanase_CS"/>
</dbReference>
<dbReference type="InterPro" id="IPR035400">
    <property type="entry name" value="Urocanase_N"/>
</dbReference>
<dbReference type="InterPro" id="IPR035085">
    <property type="entry name" value="Urocanase_Rossmann-like"/>
</dbReference>
<dbReference type="InterPro" id="IPR036190">
    <property type="entry name" value="Urocanase_sf"/>
</dbReference>
<dbReference type="NCBIfam" id="TIGR01228">
    <property type="entry name" value="hutU"/>
    <property type="match status" value="1"/>
</dbReference>
<dbReference type="NCBIfam" id="NF003820">
    <property type="entry name" value="PRK05414.1"/>
    <property type="match status" value="1"/>
</dbReference>
<dbReference type="PANTHER" id="PTHR12216">
    <property type="entry name" value="UROCANATE HYDRATASE"/>
    <property type="match status" value="1"/>
</dbReference>
<dbReference type="PANTHER" id="PTHR12216:SF4">
    <property type="entry name" value="UROCANATE HYDRATASE"/>
    <property type="match status" value="1"/>
</dbReference>
<dbReference type="Pfam" id="PF01175">
    <property type="entry name" value="Urocanase"/>
    <property type="match status" value="1"/>
</dbReference>
<dbReference type="Pfam" id="PF17392">
    <property type="entry name" value="Urocanase_C"/>
    <property type="match status" value="1"/>
</dbReference>
<dbReference type="Pfam" id="PF17391">
    <property type="entry name" value="Urocanase_N"/>
    <property type="match status" value="1"/>
</dbReference>
<dbReference type="PIRSF" id="PIRSF001423">
    <property type="entry name" value="Urocanate_hydrat"/>
    <property type="match status" value="1"/>
</dbReference>
<dbReference type="SUPFAM" id="SSF111326">
    <property type="entry name" value="Urocanase"/>
    <property type="match status" value="1"/>
</dbReference>
<dbReference type="PROSITE" id="PS01233">
    <property type="entry name" value="UROCANASE"/>
    <property type="match status" value="1"/>
</dbReference>
<name>HUTU_SHEPC</name>
<evidence type="ECO:0000255" key="1">
    <source>
        <dbReference type="HAMAP-Rule" id="MF_00577"/>
    </source>
</evidence>
<accession>A4Y1I2</accession>
<protein>
    <recommendedName>
        <fullName evidence="1">Urocanate hydratase</fullName>
        <shortName evidence="1">Urocanase</shortName>
        <ecNumber evidence="1">4.2.1.49</ecNumber>
    </recommendedName>
    <alternativeName>
        <fullName evidence="1">Imidazolonepropionate hydrolase</fullName>
    </alternativeName>
</protein>
<feature type="chain" id="PRO_1000025151" description="Urocanate hydratase">
    <location>
        <begin position="1"/>
        <end position="555"/>
    </location>
</feature>
<feature type="active site" evidence="1">
    <location>
        <position position="410"/>
    </location>
</feature>
<feature type="binding site" evidence="1">
    <location>
        <begin position="52"/>
        <end position="53"/>
    </location>
    <ligand>
        <name>NAD(+)</name>
        <dbReference type="ChEBI" id="CHEBI:57540"/>
    </ligand>
</feature>
<feature type="binding site" evidence="1">
    <location>
        <position position="130"/>
    </location>
    <ligand>
        <name>NAD(+)</name>
        <dbReference type="ChEBI" id="CHEBI:57540"/>
    </ligand>
</feature>
<feature type="binding site" evidence="1">
    <location>
        <begin position="176"/>
        <end position="178"/>
    </location>
    <ligand>
        <name>NAD(+)</name>
        <dbReference type="ChEBI" id="CHEBI:57540"/>
    </ligand>
</feature>
<feature type="binding site" evidence="1">
    <location>
        <position position="196"/>
    </location>
    <ligand>
        <name>NAD(+)</name>
        <dbReference type="ChEBI" id="CHEBI:57540"/>
    </ligand>
</feature>
<feature type="binding site" evidence="1">
    <location>
        <position position="201"/>
    </location>
    <ligand>
        <name>NAD(+)</name>
        <dbReference type="ChEBI" id="CHEBI:57540"/>
    </ligand>
</feature>
<feature type="binding site" evidence="1">
    <location>
        <begin position="242"/>
        <end position="243"/>
    </location>
    <ligand>
        <name>NAD(+)</name>
        <dbReference type="ChEBI" id="CHEBI:57540"/>
    </ligand>
</feature>
<feature type="binding site" evidence="1">
    <location>
        <begin position="263"/>
        <end position="267"/>
    </location>
    <ligand>
        <name>NAD(+)</name>
        <dbReference type="ChEBI" id="CHEBI:57540"/>
    </ligand>
</feature>
<feature type="binding site" evidence="1">
    <location>
        <begin position="273"/>
        <end position="274"/>
    </location>
    <ligand>
        <name>NAD(+)</name>
        <dbReference type="ChEBI" id="CHEBI:57540"/>
    </ligand>
</feature>
<feature type="binding site" evidence="1">
    <location>
        <position position="322"/>
    </location>
    <ligand>
        <name>NAD(+)</name>
        <dbReference type="ChEBI" id="CHEBI:57540"/>
    </ligand>
</feature>
<feature type="binding site" evidence="1">
    <location>
        <position position="492"/>
    </location>
    <ligand>
        <name>NAD(+)</name>
        <dbReference type="ChEBI" id="CHEBI:57540"/>
    </ligand>
</feature>
<gene>
    <name evidence="1" type="primary">hutU</name>
    <name type="ordered locus">Sputcn32_0079</name>
</gene>
<proteinExistence type="inferred from homology"/>
<comment type="function">
    <text evidence="1">Catalyzes the conversion of urocanate to 4-imidazolone-5-propionate.</text>
</comment>
<comment type="catalytic activity">
    <reaction evidence="1">
        <text>4-imidazolone-5-propanoate = trans-urocanate + H2O</text>
        <dbReference type="Rhea" id="RHEA:13101"/>
        <dbReference type="ChEBI" id="CHEBI:15377"/>
        <dbReference type="ChEBI" id="CHEBI:17771"/>
        <dbReference type="ChEBI" id="CHEBI:77893"/>
        <dbReference type="EC" id="4.2.1.49"/>
    </reaction>
</comment>
<comment type="cofactor">
    <cofactor evidence="1">
        <name>NAD(+)</name>
        <dbReference type="ChEBI" id="CHEBI:57540"/>
    </cofactor>
    <text evidence="1">Binds 1 NAD(+) per subunit.</text>
</comment>
<comment type="pathway">
    <text evidence="1">Amino-acid degradation; L-histidine degradation into L-glutamate; N-formimidoyl-L-glutamate from L-histidine: step 2/3.</text>
</comment>
<comment type="subcellular location">
    <subcellularLocation>
        <location evidence="1">Cytoplasm</location>
    </subcellularLocation>
</comment>
<comment type="similarity">
    <text evidence="1">Belongs to the urocanase family.</text>
</comment>
<organism>
    <name type="scientific">Shewanella putrefaciens (strain CN-32 / ATCC BAA-453)</name>
    <dbReference type="NCBI Taxonomy" id="319224"/>
    <lineage>
        <taxon>Bacteria</taxon>
        <taxon>Pseudomonadati</taxon>
        <taxon>Pseudomonadota</taxon>
        <taxon>Gammaproteobacteria</taxon>
        <taxon>Alteromonadales</taxon>
        <taxon>Shewanellaceae</taxon>
        <taxon>Shewanella</taxon>
    </lineage>
</organism>
<sequence>MDKRHDPSRRIIAPHGTQLSCKSWLTEAPMRMLMNNLHPDVAERPEDLVVYGGIGRAARDWDCYDKIIEVLQRLEDDETLLVQSGKPVGVFRTHADAPRVLIANSNLVPHWANWEHFNELDKLGLAMYGQMTAGSWIYIGTQGIVQGTYETFVSVAKQHFEGISKGKWILTGGLGGMGGAQTLAGTMAGFSVLACEVDETRIDFRLRTRYVDKKATSLDEALAMIEAANQAGKPVSVGLLANAADVFAELVKRGVTPDVVTDQTSAHDPLNGYLPQGWTMAEAAAMRKTDEAAVIKAAKASMAVQVQAMLDLQTAGAATLDYGNNIRQMAFEMGVENAFDFPGFVPAYIRPLFCEGIGPFRWVALSGDPEDIYKTDAKVKELIPDNPLLHNWLDMARERIAFQGLPARICWVGLKDRARLALAFNEMVKNGELSAPVVIGRDHLDSGSVASPNRETESMLDGSDAVSDWPLLNALLNTASGATWVSLHHGGGVGMGFSQHSGVVIVCDGTDAAAKRVGRVLWNDPATGVMRHADAGYEIAKNCAKEQGLDLPMQD</sequence>
<keyword id="KW-0963">Cytoplasm</keyword>
<keyword id="KW-0369">Histidine metabolism</keyword>
<keyword id="KW-0456">Lyase</keyword>
<keyword id="KW-0520">NAD</keyword>